<protein>
    <recommendedName>
        <fullName evidence="1">Aspartate carbamoyltransferase catalytic subunit</fullName>
        <ecNumber evidence="1">2.1.3.2</ecNumber>
    </recommendedName>
    <alternativeName>
        <fullName evidence="1">Aspartate transcarbamylase</fullName>
        <shortName evidence="1">ATCase</shortName>
    </alternativeName>
</protein>
<feature type="chain" id="PRO_1000088773" description="Aspartate carbamoyltransferase catalytic subunit">
    <location>
        <begin position="1"/>
        <end position="309"/>
    </location>
</feature>
<feature type="binding site" evidence="1">
    <location>
        <position position="56"/>
    </location>
    <ligand>
        <name>carbamoyl phosphate</name>
        <dbReference type="ChEBI" id="CHEBI:58228"/>
    </ligand>
</feature>
<feature type="binding site" evidence="1">
    <location>
        <position position="57"/>
    </location>
    <ligand>
        <name>carbamoyl phosphate</name>
        <dbReference type="ChEBI" id="CHEBI:58228"/>
    </ligand>
</feature>
<feature type="binding site" evidence="1">
    <location>
        <position position="84"/>
    </location>
    <ligand>
        <name>L-aspartate</name>
        <dbReference type="ChEBI" id="CHEBI:29991"/>
    </ligand>
</feature>
<feature type="binding site" evidence="1">
    <location>
        <position position="106"/>
    </location>
    <ligand>
        <name>carbamoyl phosphate</name>
        <dbReference type="ChEBI" id="CHEBI:58228"/>
    </ligand>
</feature>
<feature type="binding site" evidence="1">
    <location>
        <position position="136"/>
    </location>
    <ligand>
        <name>carbamoyl phosphate</name>
        <dbReference type="ChEBI" id="CHEBI:58228"/>
    </ligand>
</feature>
<feature type="binding site" evidence="1">
    <location>
        <position position="139"/>
    </location>
    <ligand>
        <name>carbamoyl phosphate</name>
        <dbReference type="ChEBI" id="CHEBI:58228"/>
    </ligand>
</feature>
<feature type="binding site" evidence="1">
    <location>
        <position position="169"/>
    </location>
    <ligand>
        <name>L-aspartate</name>
        <dbReference type="ChEBI" id="CHEBI:29991"/>
    </ligand>
</feature>
<feature type="binding site" evidence="1">
    <location>
        <position position="221"/>
    </location>
    <ligand>
        <name>L-aspartate</name>
        <dbReference type="ChEBI" id="CHEBI:29991"/>
    </ligand>
</feature>
<feature type="binding site" evidence="1">
    <location>
        <position position="264"/>
    </location>
    <ligand>
        <name>carbamoyl phosphate</name>
        <dbReference type="ChEBI" id="CHEBI:58228"/>
    </ligand>
</feature>
<feature type="binding site" evidence="1">
    <location>
        <position position="265"/>
    </location>
    <ligand>
        <name>carbamoyl phosphate</name>
        <dbReference type="ChEBI" id="CHEBI:58228"/>
    </ligand>
</feature>
<gene>
    <name evidence="1" type="primary">pyrB</name>
    <name type="ordered locus">LAR_0117</name>
</gene>
<accession>B2G5A1</accession>
<sequence>MISTERIQPNLVTVADMDAADAIDLIHEAQAYKAGKQAVLTAPAYAVNLFFENSTRTKTSFQMAQMKLGMNVLEFEAGTSSVKKGESLYDTVKTMESIGVNVAVIRHPENEYYNQLINHSDLKIGIVNGGDGSGQHPSQCLLDMMTINEEFGDFKGLKVLIIGDLSHSRVAHSNAMMLNRLGAEVYFAGPEKWYDPTLEQYGTFGDFDELLPQMDVVNLLRVQNERLTTADGQAFDANQYHQAYGLTLERAAKMKQGAIIMHPAPVNRGVEIDSSLVEAPNSRIFQQMTNGVYTRMAILSRVLRYQGLM</sequence>
<comment type="function">
    <text evidence="1">Catalyzes the condensation of carbamoyl phosphate and aspartate to form carbamoyl aspartate and inorganic phosphate, the committed step in the de novo pyrimidine nucleotide biosynthesis pathway.</text>
</comment>
<comment type="catalytic activity">
    <reaction evidence="1">
        <text>carbamoyl phosphate + L-aspartate = N-carbamoyl-L-aspartate + phosphate + H(+)</text>
        <dbReference type="Rhea" id="RHEA:20013"/>
        <dbReference type="ChEBI" id="CHEBI:15378"/>
        <dbReference type="ChEBI" id="CHEBI:29991"/>
        <dbReference type="ChEBI" id="CHEBI:32814"/>
        <dbReference type="ChEBI" id="CHEBI:43474"/>
        <dbReference type="ChEBI" id="CHEBI:58228"/>
        <dbReference type="EC" id="2.1.3.2"/>
    </reaction>
</comment>
<comment type="pathway">
    <text evidence="1">Pyrimidine metabolism; UMP biosynthesis via de novo pathway; (S)-dihydroorotate from bicarbonate: step 2/3.</text>
</comment>
<comment type="subunit">
    <text evidence="1">Heterododecamer (2C3:3R2) of six catalytic PyrB chains organized as two trimers (C3), and six regulatory PyrI chains organized as three dimers (R2).</text>
</comment>
<comment type="similarity">
    <text evidence="1">Belongs to the aspartate/ornithine carbamoyltransferase superfamily. ATCase family.</text>
</comment>
<evidence type="ECO:0000255" key="1">
    <source>
        <dbReference type="HAMAP-Rule" id="MF_00001"/>
    </source>
</evidence>
<reference key="1">
    <citation type="journal article" date="2008" name="DNA Res.">
        <title>Comparative genome analysis of Lactobacillus reuteri and Lactobacillus fermentum reveal a genomic island for reuterin and cobalamin production.</title>
        <authorList>
            <person name="Morita H."/>
            <person name="Toh H."/>
            <person name="Fukuda S."/>
            <person name="Horikawa H."/>
            <person name="Oshima K."/>
            <person name="Suzuki T."/>
            <person name="Murakami M."/>
            <person name="Hisamatsu S."/>
            <person name="Kato Y."/>
            <person name="Takizawa T."/>
            <person name="Fukuoka H."/>
            <person name="Yoshimura T."/>
            <person name="Itoh K."/>
            <person name="O'Sullivan D.J."/>
            <person name="McKay L.L."/>
            <person name="Ohno H."/>
            <person name="Kikuchi J."/>
            <person name="Masaoka T."/>
            <person name="Hattori M."/>
        </authorList>
    </citation>
    <scope>NUCLEOTIDE SEQUENCE [LARGE SCALE GENOMIC DNA]</scope>
    <source>
        <strain>JCM 1112</strain>
    </source>
</reference>
<name>PYRB_LIMRJ</name>
<dbReference type="EC" id="2.1.3.2" evidence="1"/>
<dbReference type="EMBL" id="AP007281">
    <property type="protein sequence ID" value="BAG24633.1"/>
    <property type="molecule type" value="Genomic_DNA"/>
</dbReference>
<dbReference type="RefSeq" id="WP_003669696.1">
    <property type="nucleotide sequence ID" value="NC_010609.1"/>
</dbReference>
<dbReference type="SMR" id="B2G5A1"/>
<dbReference type="KEGG" id="lrf:LAR_0117"/>
<dbReference type="HOGENOM" id="CLU_043846_2_1_9"/>
<dbReference type="UniPathway" id="UPA00070">
    <property type="reaction ID" value="UER00116"/>
</dbReference>
<dbReference type="GO" id="GO:0005829">
    <property type="term" value="C:cytosol"/>
    <property type="evidence" value="ECO:0007669"/>
    <property type="project" value="TreeGrafter"/>
</dbReference>
<dbReference type="GO" id="GO:0016597">
    <property type="term" value="F:amino acid binding"/>
    <property type="evidence" value="ECO:0007669"/>
    <property type="project" value="InterPro"/>
</dbReference>
<dbReference type="GO" id="GO:0004070">
    <property type="term" value="F:aspartate carbamoyltransferase activity"/>
    <property type="evidence" value="ECO:0007669"/>
    <property type="project" value="UniProtKB-UniRule"/>
</dbReference>
<dbReference type="GO" id="GO:0006207">
    <property type="term" value="P:'de novo' pyrimidine nucleobase biosynthetic process"/>
    <property type="evidence" value="ECO:0007669"/>
    <property type="project" value="InterPro"/>
</dbReference>
<dbReference type="GO" id="GO:0044205">
    <property type="term" value="P:'de novo' UMP biosynthetic process"/>
    <property type="evidence" value="ECO:0007669"/>
    <property type="project" value="UniProtKB-UniRule"/>
</dbReference>
<dbReference type="GO" id="GO:0006520">
    <property type="term" value="P:amino acid metabolic process"/>
    <property type="evidence" value="ECO:0007669"/>
    <property type="project" value="InterPro"/>
</dbReference>
<dbReference type="FunFam" id="3.40.50.1370:FF:000011">
    <property type="entry name" value="Aspartate carbamoyltransferase"/>
    <property type="match status" value="1"/>
</dbReference>
<dbReference type="Gene3D" id="3.40.50.1370">
    <property type="entry name" value="Aspartate/ornithine carbamoyltransferase"/>
    <property type="match status" value="2"/>
</dbReference>
<dbReference type="HAMAP" id="MF_00001">
    <property type="entry name" value="Asp_carb_tr"/>
    <property type="match status" value="1"/>
</dbReference>
<dbReference type="InterPro" id="IPR006132">
    <property type="entry name" value="Asp/Orn_carbamoyltranf_P-bd"/>
</dbReference>
<dbReference type="InterPro" id="IPR006130">
    <property type="entry name" value="Asp/Orn_carbamoylTrfase"/>
</dbReference>
<dbReference type="InterPro" id="IPR036901">
    <property type="entry name" value="Asp/Orn_carbamoylTrfase_sf"/>
</dbReference>
<dbReference type="InterPro" id="IPR002082">
    <property type="entry name" value="Asp_carbamoyltransf"/>
</dbReference>
<dbReference type="InterPro" id="IPR006131">
    <property type="entry name" value="Asp_carbamoyltransf_Asp/Orn-bd"/>
</dbReference>
<dbReference type="NCBIfam" id="TIGR00670">
    <property type="entry name" value="asp_carb_tr"/>
    <property type="match status" value="1"/>
</dbReference>
<dbReference type="NCBIfam" id="NF002032">
    <property type="entry name" value="PRK00856.1"/>
    <property type="match status" value="1"/>
</dbReference>
<dbReference type="PANTHER" id="PTHR45753:SF6">
    <property type="entry name" value="ASPARTATE CARBAMOYLTRANSFERASE"/>
    <property type="match status" value="1"/>
</dbReference>
<dbReference type="PANTHER" id="PTHR45753">
    <property type="entry name" value="ORNITHINE CARBAMOYLTRANSFERASE, MITOCHONDRIAL"/>
    <property type="match status" value="1"/>
</dbReference>
<dbReference type="Pfam" id="PF00185">
    <property type="entry name" value="OTCace"/>
    <property type="match status" value="1"/>
</dbReference>
<dbReference type="Pfam" id="PF02729">
    <property type="entry name" value="OTCace_N"/>
    <property type="match status" value="1"/>
</dbReference>
<dbReference type="PRINTS" id="PR00100">
    <property type="entry name" value="AOTCASE"/>
</dbReference>
<dbReference type="PRINTS" id="PR00101">
    <property type="entry name" value="ATCASE"/>
</dbReference>
<dbReference type="SUPFAM" id="SSF53671">
    <property type="entry name" value="Aspartate/ornithine carbamoyltransferase"/>
    <property type="match status" value="1"/>
</dbReference>
<dbReference type="PROSITE" id="PS00097">
    <property type="entry name" value="CARBAMOYLTRANSFERASE"/>
    <property type="match status" value="1"/>
</dbReference>
<organism>
    <name type="scientific">Limosilactobacillus reuteri subsp. reuteri (strain JCM 1112)</name>
    <name type="common">Lactobacillus reuteri</name>
    <dbReference type="NCBI Taxonomy" id="557433"/>
    <lineage>
        <taxon>Bacteria</taxon>
        <taxon>Bacillati</taxon>
        <taxon>Bacillota</taxon>
        <taxon>Bacilli</taxon>
        <taxon>Lactobacillales</taxon>
        <taxon>Lactobacillaceae</taxon>
        <taxon>Limosilactobacillus</taxon>
    </lineage>
</organism>
<proteinExistence type="inferred from homology"/>
<keyword id="KW-0665">Pyrimidine biosynthesis</keyword>
<keyword id="KW-0808">Transferase</keyword>